<keyword id="KW-0105">Cadmium resistance</keyword>
<keyword id="KW-0238">DNA-binding</keyword>
<keyword id="KW-0804">Transcription</keyword>
<keyword id="KW-0805">Transcription regulation</keyword>
<keyword id="KW-0814">Transposable element</keyword>
<gene>
    <name type="primary">cadC</name>
</gene>
<feature type="chain" id="PRO_0000160621" description="Cadmium resistance transcriptional regulatory protein CadC homolog">
    <location>
        <begin position="1"/>
        <end position="121"/>
    </location>
</feature>
<feature type="domain" description="HTH arsR-type" evidence="1">
    <location>
        <begin position="23"/>
        <end position="118"/>
    </location>
</feature>
<feature type="DNA-binding region" description="H-T-H motif" evidence="1">
    <location>
        <begin position="58"/>
        <end position="77"/>
    </location>
</feature>
<protein>
    <recommendedName>
        <fullName>Cadmium resistance transcriptional regulatory protein CadC homolog</fullName>
    </recommendedName>
</protein>
<reference key="1">
    <citation type="submission" date="1993-02" db="EMBL/GenBank/DDBJ databases">
        <title>PsiTn554: a Staphylococcus aureus chromosomal element encoding cadmium resistance determinants, and genes resembling the transposases genes of Tn554.</title>
        <authorList>
            <person name="Chikramane S.G."/>
            <person name="Dubin D.T."/>
        </authorList>
    </citation>
    <scope>NUCLEOTIDE SEQUENCE [GENOMIC DNA]</scope>
    <source>
        <transposon>PsiTn554</transposon>
    </source>
</reference>
<organism>
    <name type="scientific">Staphylococcus aureus</name>
    <dbReference type="NCBI Taxonomy" id="1280"/>
    <lineage>
        <taxon>Bacteria</taxon>
        <taxon>Bacillati</taxon>
        <taxon>Bacillota</taxon>
        <taxon>Bacilli</taxon>
        <taxon>Bacillales</taxon>
        <taxon>Staphylococcaceae</taxon>
        <taxon>Staphylococcus</taxon>
    </lineage>
</organism>
<accession>P37374</accession>
<sequence>MTKDMCEVTYIHEDKVNRAKKDLAKQNPMDVAKVFKALSDDTRVKIAYVLSLEGELCVCDVANIIESSTATASHHLRLLKNLGIAKYRKEGKLVYYSLDDEHVKQLVEKAFLHQREVASIG</sequence>
<proteinExistence type="predicted"/>
<evidence type="ECO:0000255" key="1">
    <source>
        <dbReference type="PROSITE-ProRule" id="PRU00340"/>
    </source>
</evidence>
<dbReference type="EMBL" id="L10909">
    <property type="protein sequence ID" value="AAA26609.1"/>
    <property type="molecule type" value="Genomic_DNA"/>
</dbReference>
<dbReference type="RefSeq" id="WP_000159127.1">
    <property type="nucleotide sequence ID" value="NZ_WBTW01000007.1"/>
</dbReference>
<dbReference type="SMR" id="P37374"/>
<dbReference type="OMA" id="SECCGCE"/>
<dbReference type="GO" id="GO:0003677">
    <property type="term" value="F:DNA binding"/>
    <property type="evidence" value="ECO:0007669"/>
    <property type="project" value="UniProtKB-KW"/>
</dbReference>
<dbReference type="GO" id="GO:0003700">
    <property type="term" value="F:DNA-binding transcription factor activity"/>
    <property type="evidence" value="ECO:0007669"/>
    <property type="project" value="InterPro"/>
</dbReference>
<dbReference type="GO" id="GO:0046686">
    <property type="term" value="P:response to cadmium ion"/>
    <property type="evidence" value="ECO:0007669"/>
    <property type="project" value="UniProtKB-KW"/>
</dbReference>
<dbReference type="CDD" id="cd00090">
    <property type="entry name" value="HTH_ARSR"/>
    <property type="match status" value="1"/>
</dbReference>
<dbReference type="Gene3D" id="1.10.10.10">
    <property type="entry name" value="Winged helix-like DNA-binding domain superfamily/Winged helix DNA-binding domain"/>
    <property type="match status" value="1"/>
</dbReference>
<dbReference type="InterPro" id="IPR011991">
    <property type="entry name" value="ArsR-like_HTH"/>
</dbReference>
<dbReference type="InterPro" id="IPR018334">
    <property type="entry name" value="ArsR_HTH"/>
</dbReference>
<dbReference type="InterPro" id="IPR001845">
    <property type="entry name" value="HTH_ArsR_DNA-bd_dom"/>
</dbReference>
<dbReference type="InterPro" id="IPR051011">
    <property type="entry name" value="Metal_resp_trans_reg"/>
</dbReference>
<dbReference type="InterPro" id="IPR036388">
    <property type="entry name" value="WH-like_DNA-bd_sf"/>
</dbReference>
<dbReference type="InterPro" id="IPR036390">
    <property type="entry name" value="WH_DNA-bd_sf"/>
</dbReference>
<dbReference type="NCBIfam" id="NF033788">
    <property type="entry name" value="HTH_metalloreg"/>
    <property type="match status" value="1"/>
</dbReference>
<dbReference type="PANTHER" id="PTHR43132">
    <property type="entry name" value="ARSENICAL RESISTANCE OPERON REPRESSOR ARSR-RELATED"/>
    <property type="match status" value="1"/>
</dbReference>
<dbReference type="PANTHER" id="PTHR43132:SF6">
    <property type="entry name" value="HTH-TYPE TRANSCRIPTIONAL REPRESSOR CZRA"/>
    <property type="match status" value="1"/>
</dbReference>
<dbReference type="Pfam" id="PF01022">
    <property type="entry name" value="HTH_5"/>
    <property type="match status" value="1"/>
</dbReference>
<dbReference type="PRINTS" id="PR00778">
    <property type="entry name" value="HTHARSR"/>
</dbReference>
<dbReference type="SMART" id="SM00418">
    <property type="entry name" value="HTH_ARSR"/>
    <property type="match status" value="1"/>
</dbReference>
<dbReference type="SUPFAM" id="SSF46785">
    <property type="entry name" value="Winged helix' DNA-binding domain"/>
    <property type="match status" value="1"/>
</dbReference>
<dbReference type="PROSITE" id="PS00846">
    <property type="entry name" value="HTH_ARSR_1"/>
    <property type="match status" value="1"/>
</dbReference>
<dbReference type="PROSITE" id="PS50987">
    <property type="entry name" value="HTH_ARSR_2"/>
    <property type="match status" value="1"/>
</dbReference>
<name>CADF_STAAU</name>